<protein>
    <recommendedName>
        <fullName>Uncharacterized lipoprotein RBE_1261</fullName>
    </recommendedName>
</protein>
<feature type="signal peptide" evidence="2">
    <location>
        <begin position="1"/>
        <end position="18"/>
    </location>
</feature>
<feature type="chain" id="PRO_0000269909" description="Uncharacterized lipoprotein RBE_1261">
    <location>
        <begin position="19"/>
        <end position="1157"/>
    </location>
</feature>
<feature type="transmembrane region" description="Helical" evidence="1">
    <location>
        <begin position="292"/>
        <end position="312"/>
    </location>
</feature>
<feature type="transmembrane region" description="Helical" evidence="1">
    <location>
        <begin position="394"/>
        <end position="414"/>
    </location>
</feature>
<feature type="transmembrane region" description="Helical" evidence="1">
    <location>
        <begin position="423"/>
        <end position="443"/>
    </location>
</feature>
<feature type="transmembrane region" description="Helical" evidence="1">
    <location>
        <begin position="458"/>
        <end position="478"/>
    </location>
</feature>
<feature type="region of interest" description="Disordered" evidence="3">
    <location>
        <begin position="1134"/>
        <end position="1157"/>
    </location>
</feature>
<feature type="compositionally biased region" description="Basic and acidic residues" evidence="3">
    <location>
        <begin position="1148"/>
        <end position="1157"/>
    </location>
</feature>
<feature type="lipid moiety-binding region" description="N-palmitoyl cysteine" evidence="2">
    <location>
        <position position="19"/>
    </location>
</feature>
<feature type="lipid moiety-binding region" description="S-diacylglycerol cysteine" evidence="2">
    <location>
        <position position="19"/>
    </location>
</feature>
<sequence>MNRNIFITLLISLLALSGCSGDTCIDPDDFGFIKFNISSRYDPSEVTSRQEGDQVAPWRDSAYKVNGYPLTIMVRPWDYMSGDKNTSGMLSAWCPWYGQQNNFTTLAEFCVRLRPCQFTDGKMCPTPTPRDAPINNAPCILTNGVGLYFLIADKGSNPNMSPDSQRSPKGITQHLGEPVASQDYEFYSISSTGKFLQAGGINYQYGCTSLPCDQASNYAQSSLYFKILDKFYDDNSGQYRVVIKSGVSDTRPDPLQFLTNLIKNELFGTSDKDPGIVRQTYQQIIETPGYRLSVSALLTLYIMFTGFSFLIGNINMTHVELVVRILKVSVVSILLSTSKAWTFFHDYLFVFFVEGLAQILQIVQDASTGQSLLSLLISPQTLSKLFSLLFVDPLGFIYIILYLIALYFIFLLIFKATIIYLTALITIGMIITMAPIFICFMLFNITRSLFENWLRQLISYAIQPIILFVGIAFIGMIIKTEIQSTLGFAVCKKDFPDLGPINQIFGSFTEDLDSSIGNSIFYWWFPVPMKGGIENFTQADILVPEDYTKKDGTKCLAYQCIDKRYIQLPFLDLVKDANRISNFINGKFVQLDGLLLIFVSIYLLSKFNDTAISTASFIAGTSGNLTSIQAVNQQSYDSIMKQVNRPINYATGVISKPINRMQEQTSMFFAEKYQGLMMSRLENKALSSSANKAVQNEVKRKYGIDHKDVNMQAGADYKNGISKLLDNKTFLPKGGDLDVKKLATMNFGQLRDEFAKNKYGAKNYSSLTSDQKLELDKFMKSDLGEKGKSAKSLRELASDANFTRDYQSAYKYAHKEMSGRGVGLFGKNIGVLRSWQEMENRMKTKRELKEQKRVAIGEKIYAGYTGLKRDALTAIVGKDLRDKYEGNLTSAEWHDFDYNDPQLRTYSESLKDKERAREVKELQMQINKETLAVQEDILSPEYLARLKRPSDVEYYQELGQRRLIHEVRDRLSEGSDPVIMGDRFMQEKATDDQMRTMIDNAHQKHAEFIDQDRYTRRQEHYDIMHEKAQENIDRTYKEIKDHFKRDDIKLEEMPALIAQYEREKPIESFDSKTELSLDKRIEEAVSNFNINAKNYEYSASVLNNIEERKQAITDEVNTQIDRINKYRENAKMPQYQKPVENSGRKLRKLEDHLRNMK</sequence>
<gene>
    <name type="ordered locus">RBE_1261</name>
</gene>
<accession>Q1RH22</accession>
<organism>
    <name type="scientific">Rickettsia bellii (strain RML369-C)</name>
    <dbReference type="NCBI Taxonomy" id="336407"/>
    <lineage>
        <taxon>Bacteria</taxon>
        <taxon>Pseudomonadati</taxon>
        <taxon>Pseudomonadota</taxon>
        <taxon>Alphaproteobacteria</taxon>
        <taxon>Rickettsiales</taxon>
        <taxon>Rickettsiaceae</taxon>
        <taxon>Rickettsieae</taxon>
        <taxon>Rickettsia</taxon>
        <taxon>belli group</taxon>
    </lineage>
</organism>
<evidence type="ECO:0000255" key="1"/>
<evidence type="ECO:0000255" key="2">
    <source>
        <dbReference type="PROSITE-ProRule" id="PRU00303"/>
    </source>
</evidence>
<evidence type="ECO:0000256" key="3">
    <source>
        <dbReference type="SAM" id="MobiDB-lite"/>
    </source>
</evidence>
<evidence type="ECO:0000305" key="4"/>
<dbReference type="EMBL" id="CP000087">
    <property type="protein sequence ID" value="ABE05342.1"/>
    <property type="molecule type" value="Genomic_DNA"/>
</dbReference>
<dbReference type="RefSeq" id="WP_011477914.1">
    <property type="nucleotide sequence ID" value="NC_007940.1"/>
</dbReference>
<dbReference type="SMR" id="Q1RH22"/>
<dbReference type="KEGG" id="rbe:RBE_1261"/>
<dbReference type="eggNOG" id="COG0419">
    <property type="taxonomic scope" value="Bacteria"/>
</dbReference>
<dbReference type="eggNOG" id="COG3704">
    <property type="taxonomic scope" value="Bacteria"/>
</dbReference>
<dbReference type="HOGENOM" id="CLU_275941_0_0_5"/>
<dbReference type="OrthoDB" id="7163280at2"/>
<dbReference type="Proteomes" id="UP000001951">
    <property type="component" value="Chromosome"/>
</dbReference>
<dbReference type="GO" id="GO:0005886">
    <property type="term" value="C:plasma membrane"/>
    <property type="evidence" value="ECO:0007669"/>
    <property type="project" value="UniProtKB-SubCell"/>
</dbReference>
<dbReference type="GO" id="GO:0030255">
    <property type="term" value="P:protein secretion by the type IV secretion system"/>
    <property type="evidence" value="ECO:0007669"/>
    <property type="project" value="InterPro"/>
</dbReference>
<dbReference type="CDD" id="cd06174">
    <property type="entry name" value="MFS"/>
    <property type="match status" value="1"/>
</dbReference>
<dbReference type="InterPro" id="IPR007688">
    <property type="entry name" value="Conjugal_tfr_TrbL/VirB6"/>
</dbReference>
<dbReference type="Pfam" id="PF04610">
    <property type="entry name" value="TrbL"/>
    <property type="match status" value="1"/>
</dbReference>
<dbReference type="PROSITE" id="PS51257">
    <property type="entry name" value="PROKAR_LIPOPROTEIN"/>
    <property type="match status" value="1"/>
</dbReference>
<proteinExistence type="inferred from homology"/>
<comment type="subcellular location">
    <subcellularLocation>
        <location evidence="2">Cell membrane</location>
        <topology evidence="4">Multi-pass membrane protein</topology>
    </subcellularLocation>
    <subcellularLocation>
        <location evidence="2">Cell membrane</location>
        <topology evidence="2">Lipid-anchor</topology>
    </subcellularLocation>
</comment>
<comment type="similarity">
    <text evidence="4">Belongs to the TrbL/VirB6 family.</text>
</comment>
<reference key="1">
    <citation type="journal article" date="2006" name="PLoS Genet.">
        <title>Genome sequence of Rickettsia bellii illuminates the role of amoebae in gene exchanges between intracellular pathogens.</title>
        <authorList>
            <person name="Ogata H."/>
            <person name="La Scola B."/>
            <person name="Audic S."/>
            <person name="Renesto P."/>
            <person name="Blanc G."/>
            <person name="Robert C."/>
            <person name="Fournier P.-E."/>
            <person name="Claverie J.-M."/>
            <person name="Raoult D."/>
        </authorList>
    </citation>
    <scope>NUCLEOTIDE SEQUENCE [LARGE SCALE GENOMIC DNA]</scope>
    <source>
        <strain>RML369-C</strain>
    </source>
</reference>
<keyword id="KW-1003">Cell membrane</keyword>
<keyword id="KW-0449">Lipoprotein</keyword>
<keyword id="KW-0472">Membrane</keyword>
<keyword id="KW-0564">Palmitate</keyword>
<keyword id="KW-0732">Signal</keyword>
<keyword id="KW-0812">Transmembrane</keyword>
<keyword id="KW-1133">Transmembrane helix</keyword>
<name>Y1261_RICBR</name>